<feature type="signal peptide" evidence="3">
    <location>
        <begin position="1"/>
        <end position="22"/>
    </location>
</feature>
<feature type="chain" id="PRO_0000390940" description="Mesencephalic astrocyte-derived neurotrophic factor homolog">
    <location>
        <begin position="23"/>
        <end position="173"/>
    </location>
</feature>
<feature type="disulfide bond" evidence="1">
    <location>
        <begin position="28"/>
        <end position="114"/>
    </location>
</feature>
<feature type="disulfide bond" evidence="1">
    <location>
        <begin position="31"/>
        <end position="103"/>
    </location>
</feature>
<feature type="disulfide bond" evidence="1">
    <location>
        <begin position="61"/>
        <end position="72"/>
    </location>
</feature>
<feature type="disulfide bond" evidence="1">
    <location>
        <begin position="148"/>
        <end position="151"/>
    </location>
</feature>
<proteinExistence type="inferred from homology"/>
<accession>B4JT39</accession>
<sequence length="173" mass="20093">MNTSQIVLMFCLVVGVAQTALALKEDDCEVCVKTVRRFADTLDDATKKDYKLIEADFKKFCKTQKNKEQRFCYYLGGLEESATGILNELSKPLSWSMPAEKVCEKLKKMDAQICDLRYDKQIDLNNVDLKKLKVRDLKKILNDWDENCEGCLEKSDFIKRIEELKPKYTRSEL</sequence>
<comment type="function">
    <text evidence="2">Required during the maturation of the embryonic nervous system for maintenance of neuronal and cuticular connectivity. Essential for maintenance of dopaminergic neurons and dopamine levels (By similarity).</text>
</comment>
<comment type="subcellular location">
    <subcellularLocation>
        <location evidence="2">Secreted</location>
    </subcellularLocation>
</comment>
<comment type="similarity">
    <text evidence="3">Belongs to the ARMET family.</text>
</comment>
<protein>
    <recommendedName>
        <fullName>Mesencephalic astrocyte-derived neurotrophic factor homolog</fullName>
    </recommendedName>
    <alternativeName>
        <fullName>MANF/CDNF-like protein</fullName>
    </alternativeName>
</protein>
<reference evidence="4" key="1">
    <citation type="journal article" date="2007" name="Nature">
        <title>Evolution of genes and genomes on the Drosophila phylogeny.</title>
        <authorList>
            <consortium name="Drosophila 12 genomes consortium"/>
        </authorList>
    </citation>
    <scope>NUCLEOTIDE SEQUENCE [LARGE SCALE GENOMIC DNA]</scope>
    <source>
        <strain evidence="4">Tucson 15287-2541.00</strain>
    </source>
</reference>
<organism>
    <name type="scientific">Drosophila grimshawi</name>
    <name type="common">Hawaiian fruit fly</name>
    <name type="synonym">Idiomyia grimshawi</name>
    <dbReference type="NCBI Taxonomy" id="7222"/>
    <lineage>
        <taxon>Eukaryota</taxon>
        <taxon>Metazoa</taxon>
        <taxon>Ecdysozoa</taxon>
        <taxon>Arthropoda</taxon>
        <taxon>Hexapoda</taxon>
        <taxon>Insecta</taxon>
        <taxon>Pterygota</taxon>
        <taxon>Neoptera</taxon>
        <taxon>Endopterygota</taxon>
        <taxon>Diptera</taxon>
        <taxon>Brachycera</taxon>
        <taxon>Muscomorpha</taxon>
        <taxon>Ephydroidea</taxon>
        <taxon>Drosophilidae</taxon>
        <taxon>Drosophila</taxon>
        <taxon>Hawaiian Drosophila</taxon>
    </lineage>
</organism>
<evidence type="ECO:0000250" key="1">
    <source>
        <dbReference type="UniProtKB" id="P55145"/>
    </source>
</evidence>
<evidence type="ECO:0000250" key="2">
    <source>
        <dbReference type="UniProtKB" id="Q9XZ63"/>
    </source>
</evidence>
<evidence type="ECO:0000255" key="3"/>
<evidence type="ECO:0000312" key="4">
    <source>
        <dbReference type="EMBL" id="EDV94929.1"/>
    </source>
</evidence>
<name>ARMET_DROGR</name>
<dbReference type="EMBL" id="CH916373">
    <property type="protein sequence ID" value="EDV94929.1"/>
    <property type="molecule type" value="Genomic_DNA"/>
</dbReference>
<dbReference type="SMR" id="B4JT39"/>
<dbReference type="FunCoup" id="B4JT39">
    <property type="interactions" value="387"/>
</dbReference>
<dbReference type="STRING" id="7222.B4JT39"/>
<dbReference type="EnsemblMetazoa" id="FBtr0158860">
    <property type="protein sequence ID" value="FBpp0157352"/>
    <property type="gene ID" value="FBgn0130903"/>
</dbReference>
<dbReference type="EnsemblMetazoa" id="XM_001994157.3">
    <property type="protein sequence ID" value="XP_001994193.1"/>
    <property type="gene ID" value="LOC6567212"/>
</dbReference>
<dbReference type="GeneID" id="6567212"/>
<dbReference type="KEGG" id="dgr:6567212"/>
<dbReference type="CTD" id="7873"/>
<dbReference type="eggNOG" id="KOG4154">
    <property type="taxonomic scope" value="Eukaryota"/>
</dbReference>
<dbReference type="HOGENOM" id="CLU_099080_1_0_1"/>
<dbReference type="InParanoid" id="B4JT39"/>
<dbReference type="OMA" id="WSMPADK"/>
<dbReference type="OrthoDB" id="5597848at2759"/>
<dbReference type="PhylomeDB" id="B4JT39"/>
<dbReference type="ChiTaRS" id="Manf">
    <property type="organism name" value="fly"/>
</dbReference>
<dbReference type="Proteomes" id="UP000001070">
    <property type="component" value="Unassembled WGS sequence"/>
</dbReference>
<dbReference type="GO" id="GO:0005783">
    <property type="term" value="C:endoplasmic reticulum"/>
    <property type="evidence" value="ECO:0007669"/>
    <property type="project" value="EnsemblMetazoa"/>
</dbReference>
<dbReference type="GO" id="GO:0005615">
    <property type="term" value="C:extracellular space"/>
    <property type="evidence" value="ECO:0007669"/>
    <property type="project" value="TreeGrafter"/>
</dbReference>
<dbReference type="GO" id="GO:0045202">
    <property type="term" value="C:synapse"/>
    <property type="evidence" value="ECO:0007669"/>
    <property type="project" value="GOC"/>
</dbReference>
<dbReference type="GO" id="GO:0042417">
    <property type="term" value="P:dopamine metabolic process"/>
    <property type="evidence" value="ECO:0007669"/>
    <property type="project" value="EnsemblMetazoa"/>
</dbReference>
<dbReference type="GO" id="GO:0071542">
    <property type="term" value="P:dopaminergic neuron differentiation"/>
    <property type="evidence" value="ECO:0007669"/>
    <property type="project" value="TreeGrafter"/>
</dbReference>
<dbReference type="GO" id="GO:0070050">
    <property type="term" value="P:neuron cellular homeostasis"/>
    <property type="evidence" value="ECO:0007669"/>
    <property type="project" value="EnsemblMetazoa"/>
</dbReference>
<dbReference type="GO" id="GO:0031175">
    <property type="term" value="P:neuron projection development"/>
    <property type="evidence" value="ECO:0007669"/>
    <property type="project" value="EnsemblMetazoa"/>
</dbReference>
<dbReference type="GO" id="GO:0001963">
    <property type="term" value="P:synaptic transmission, dopaminergic"/>
    <property type="evidence" value="ECO:0007669"/>
    <property type="project" value="EnsemblMetazoa"/>
</dbReference>
<dbReference type="FunFam" id="1.10.225.10:FF:000003">
    <property type="entry name" value="Mesencephalic astrocyte-derived neurotrophic factor"/>
    <property type="match status" value="1"/>
</dbReference>
<dbReference type="FunFam" id="1.10.720.30:FF:000003">
    <property type="entry name" value="Mesencephalic astrocyte-derived neurotrophic factor"/>
    <property type="match status" value="1"/>
</dbReference>
<dbReference type="Gene3D" id="1.10.720.30">
    <property type="entry name" value="SAP domain"/>
    <property type="match status" value="1"/>
</dbReference>
<dbReference type="Gene3D" id="1.10.225.10">
    <property type="entry name" value="Saposin-like"/>
    <property type="match status" value="1"/>
</dbReference>
<dbReference type="InterPro" id="IPR045333">
    <property type="entry name" value="ARMET-like"/>
</dbReference>
<dbReference type="InterPro" id="IPR019345">
    <property type="entry name" value="ARMET_C"/>
</dbReference>
<dbReference type="InterPro" id="IPR045332">
    <property type="entry name" value="ARMET_N"/>
</dbReference>
<dbReference type="InterPro" id="IPR018247">
    <property type="entry name" value="EF_Hand_1_Ca_BS"/>
</dbReference>
<dbReference type="InterPro" id="IPR036361">
    <property type="entry name" value="SAP_dom_sf"/>
</dbReference>
<dbReference type="PANTHER" id="PTHR12990">
    <property type="entry name" value="ARMET-LIKE PROTEIN"/>
    <property type="match status" value="1"/>
</dbReference>
<dbReference type="PANTHER" id="PTHR12990:SF5">
    <property type="entry name" value="MESENCEPHALIC ASTROCYTE-DERIVED NEUROTROPHIC FACTOR HOMOLOG"/>
    <property type="match status" value="1"/>
</dbReference>
<dbReference type="Pfam" id="PF10208">
    <property type="entry name" value="ARMET_C"/>
    <property type="match status" value="1"/>
</dbReference>
<dbReference type="Pfam" id="PF20145">
    <property type="entry name" value="ARMET_N"/>
    <property type="match status" value="1"/>
</dbReference>
<dbReference type="SUPFAM" id="SSF68906">
    <property type="entry name" value="SAP domain"/>
    <property type="match status" value="1"/>
</dbReference>
<gene>
    <name evidence="2" type="primary">Manf</name>
    <name type="ORF">GH23446</name>
</gene>
<keyword id="KW-0217">Developmental protein</keyword>
<keyword id="KW-1015">Disulfide bond</keyword>
<keyword id="KW-1185">Reference proteome</keyword>
<keyword id="KW-0964">Secreted</keyword>
<keyword id="KW-0732">Signal</keyword>